<feature type="chain" id="PRO_1000017221" description="5-methyltetrahydropteroyltriglutamate--homocysteine methyltransferase">
    <location>
        <begin position="1"/>
        <end position="762"/>
    </location>
</feature>
<feature type="active site" description="Proton donor" evidence="1">
    <location>
        <position position="698"/>
    </location>
</feature>
<feature type="binding site" evidence="1">
    <location>
        <begin position="17"/>
        <end position="20"/>
    </location>
    <ligand>
        <name>5-methyltetrahydropteroyltri-L-glutamate</name>
        <dbReference type="ChEBI" id="CHEBI:58207"/>
    </ligand>
</feature>
<feature type="binding site" evidence="1">
    <location>
        <position position="111"/>
    </location>
    <ligand>
        <name>5-methyltetrahydropteroyltri-L-glutamate</name>
        <dbReference type="ChEBI" id="CHEBI:58207"/>
    </ligand>
</feature>
<feature type="binding site" evidence="1">
    <location>
        <begin position="435"/>
        <end position="437"/>
    </location>
    <ligand>
        <name>L-homocysteine</name>
        <dbReference type="ChEBI" id="CHEBI:58199"/>
    </ligand>
</feature>
<feature type="binding site" evidence="1">
    <location>
        <begin position="435"/>
        <end position="437"/>
    </location>
    <ligand>
        <name>L-methionine</name>
        <dbReference type="ChEBI" id="CHEBI:57844"/>
    </ligand>
</feature>
<feature type="binding site" evidence="1">
    <location>
        <position position="488"/>
    </location>
    <ligand>
        <name>L-homocysteine</name>
        <dbReference type="ChEBI" id="CHEBI:58199"/>
    </ligand>
</feature>
<feature type="binding site" evidence="1">
    <location>
        <position position="488"/>
    </location>
    <ligand>
        <name>L-methionine</name>
        <dbReference type="ChEBI" id="CHEBI:57844"/>
    </ligand>
</feature>
<feature type="binding site" evidence="1">
    <location>
        <begin position="519"/>
        <end position="520"/>
    </location>
    <ligand>
        <name>5-methyltetrahydropteroyltri-L-glutamate</name>
        <dbReference type="ChEBI" id="CHEBI:58207"/>
    </ligand>
</feature>
<feature type="binding site" evidence="1">
    <location>
        <position position="565"/>
    </location>
    <ligand>
        <name>5-methyltetrahydropteroyltri-L-glutamate</name>
        <dbReference type="ChEBI" id="CHEBI:58207"/>
    </ligand>
</feature>
<feature type="binding site" evidence="1">
    <location>
        <position position="603"/>
    </location>
    <ligand>
        <name>L-homocysteine</name>
        <dbReference type="ChEBI" id="CHEBI:58199"/>
    </ligand>
</feature>
<feature type="binding site" evidence="1">
    <location>
        <position position="603"/>
    </location>
    <ligand>
        <name>L-methionine</name>
        <dbReference type="ChEBI" id="CHEBI:57844"/>
    </ligand>
</feature>
<feature type="binding site" evidence="1">
    <location>
        <position position="609"/>
    </location>
    <ligand>
        <name>5-methyltetrahydropteroyltri-L-glutamate</name>
        <dbReference type="ChEBI" id="CHEBI:58207"/>
    </ligand>
</feature>
<feature type="binding site" evidence="1">
    <location>
        <position position="645"/>
    </location>
    <ligand>
        <name>Zn(2+)</name>
        <dbReference type="ChEBI" id="CHEBI:29105"/>
        <note>catalytic</note>
    </ligand>
</feature>
<feature type="binding site" evidence="1">
    <location>
        <position position="647"/>
    </location>
    <ligand>
        <name>Zn(2+)</name>
        <dbReference type="ChEBI" id="CHEBI:29105"/>
        <note>catalytic</note>
    </ligand>
</feature>
<feature type="binding site" evidence="1">
    <location>
        <position position="669"/>
    </location>
    <ligand>
        <name>Zn(2+)</name>
        <dbReference type="ChEBI" id="CHEBI:29105"/>
        <note>catalytic</note>
    </ligand>
</feature>
<feature type="binding site" evidence="1">
    <location>
        <position position="730"/>
    </location>
    <ligand>
        <name>Zn(2+)</name>
        <dbReference type="ChEBI" id="CHEBI:29105"/>
        <note>catalytic</note>
    </ligand>
</feature>
<reference key="1">
    <citation type="journal article" date="2006" name="J. Bacteriol.">
        <title>Pathogenomic sequence analysis of Bacillus cereus and Bacillus thuringiensis isolates closely related to Bacillus anthracis.</title>
        <authorList>
            <person name="Han C.S."/>
            <person name="Xie G."/>
            <person name="Challacombe J.F."/>
            <person name="Altherr M.R."/>
            <person name="Bhotika S.S."/>
            <person name="Bruce D."/>
            <person name="Campbell C.S."/>
            <person name="Campbell M.L."/>
            <person name="Chen J."/>
            <person name="Chertkov O."/>
            <person name="Cleland C."/>
            <person name="Dimitrijevic M."/>
            <person name="Doggett N.A."/>
            <person name="Fawcett J.J."/>
            <person name="Glavina T."/>
            <person name="Goodwin L.A."/>
            <person name="Hill K.K."/>
            <person name="Hitchcock P."/>
            <person name="Jackson P.J."/>
            <person name="Keim P."/>
            <person name="Kewalramani A.R."/>
            <person name="Longmire J."/>
            <person name="Lucas S."/>
            <person name="Malfatti S."/>
            <person name="McMurry K."/>
            <person name="Meincke L.J."/>
            <person name="Misra M."/>
            <person name="Moseman B.L."/>
            <person name="Mundt M."/>
            <person name="Munk A.C."/>
            <person name="Okinaka R.T."/>
            <person name="Parson-Quintana B."/>
            <person name="Reilly L.P."/>
            <person name="Richardson P."/>
            <person name="Robinson D.L."/>
            <person name="Rubin E."/>
            <person name="Saunders E."/>
            <person name="Tapia R."/>
            <person name="Tesmer J.G."/>
            <person name="Thayer N."/>
            <person name="Thompson L.S."/>
            <person name="Tice H."/>
            <person name="Ticknor L.O."/>
            <person name="Wills P.L."/>
            <person name="Brettin T.S."/>
            <person name="Gilna P."/>
        </authorList>
    </citation>
    <scope>NUCLEOTIDE SEQUENCE [LARGE SCALE GENOMIC DNA]</scope>
    <source>
        <strain>ZK / E33L</strain>
    </source>
</reference>
<organism>
    <name type="scientific">Bacillus cereus (strain ZK / E33L)</name>
    <dbReference type="NCBI Taxonomy" id="288681"/>
    <lineage>
        <taxon>Bacteria</taxon>
        <taxon>Bacillati</taxon>
        <taxon>Bacillota</taxon>
        <taxon>Bacilli</taxon>
        <taxon>Bacillales</taxon>
        <taxon>Bacillaceae</taxon>
        <taxon>Bacillus</taxon>
        <taxon>Bacillus cereus group</taxon>
    </lineage>
</organism>
<protein>
    <recommendedName>
        <fullName evidence="1">5-methyltetrahydropteroyltriglutamate--homocysteine methyltransferase</fullName>
        <ecNumber evidence="1">2.1.1.14</ecNumber>
    </recommendedName>
    <alternativeName>
        <fullName evidence="1">Cobalamin-independent methionine synthase</fullName>
    </alternativeName>
    <alternativeName>
        <fullName evidence="1">Methionine synthase, vitamin-B12 independent isozyme</fullName>
    </alternativeName>
</protein>
<keyword id="KW-0028">Amino-acid biosynthesis</keyword>
<keyword id="KW-0479">Metal-binding</keyword>
<keyword id="KW-0486">Methionine biosynthesis</keyword>
<keyword id="KW-0489">Methyltransferase</keyword>
<keyword id="KW-0677">Repeat</keyword>
<keyword id="KW-0808">Transferase</keyword>
<keyword id="KW-0862">Zinc</keyword>
<dbReference type="EC" id="2.1.1.14" evidence="1"/>
<dbReference type="EMBL" id="CP000001">
    <property type="protein sequence ID" value="AAU16507.1"/>
    <property type="molecule type" value="Genomic_DNA"/>
</dbReference>
<dbReference type="RefSeq" id="WP_001007638.1">
    <property type="nucleotide sequence ID" value="NC_006274.1"/>
</dbReference>
<dbReference type="SMR" id="Q635S6"/>
<dbReference type="KEGG" id="bcz:BCE33L3760"/>
<dbReference type="PATRIC" id="fig|288681.22.peg.1646"/>
<dbReference type="UniPathway" id="UPA00051">
    <property type="reaction ID" value="UER00082"/>
</dbReference>
<dbReference type="Proteomes" id="UP000002612">
    <property type="component" value="Chromosome"/>
</dbReference>
<dbReference type="GO" id="GO:0003871">
    <property type="term" value="F:5-methyltetrahydropteroyltriglutamate-homocysteine S-methyltransferase activity"/>
    <property type="evidence" value="ECO:0007669"/>
    <property type="project" value="UniProtKB-UniRule"/>
</dbReference>
<dbReference type="GO" id="GO:0008270">
    <property type="term" value="F:zinc ion binding"/>
    <property type="evidence" value="ECO:0007669"/>
    <property type="project" value="InterPro"/>
</dbReference>
<dbReference type="GO" id="GO:0009086">
    <property type="term" value="P:methionine biosynthetic process"/>
    <property type="evidence" value="ECO:0007669"/>
    <property type="project" value="UniProtKB-UniRule"/>
</dbReference>
<dbReference type="GO" id="GO:0032259">
    <property type="term" value="P:methylation"/>
    <property type="evidence" value="ECO:0007669"/>
    <property type="project" value="UniProtKB-KW"/>
</dbReference>
<dbReference type="CDD" id="cd03311">
    <property type="entry name" value="CIMS_C_terminal_like"/>
    <property type="match status" value="1"/>
</dbReference>
<dbReference type="CDD" id="cd03312">
    <property type="entry name" value="CIMS_N_terminal_like"/>
    <property type="match status" value="1"/>
</dbReference>
<dbReference type="Gene3D" id="3.20.20.210">
    <property type="match status" value="2"/>
</dbReference>
<dbReference type="HAMAP" id="MF_00172">
    <property type="entry name" value="Meth_synth"/>
    <property type="match status" value="1"/>
</dbReference>
<dbReference type="InterPro" id="IPR013215">
    <property type="entry name" value="Cbl-indep_Met_Synth_N"/>
</dbReference>
<dbReference type="InterPro" id="IPR006276">
    <property type="entry name" value="Cobalamin-indep_Met_synthase"/>
</dbReference>
<dbReference type="InterPro" id="IPR002629">
    <property type="entry name" value="Met_Synth_C/arc"/>
</dbReference>
<dbReference type="InterPro" id="IPR038071">
    <property type="entry name" value="UROD/MetE-like_sf"/>
</dbReference>
<dbReference type="NCBIfam" id="TIGR01371">
    <property type="entry name" value="met_syn_B12ind"/>
    <property type="match status" value="1"/>
</dbReference>
<dbReference type="NCBIfam" id="NF003556">
    <property type="entry name" value="PRK05222.1"/>
    <property type="match status" value="1"/>
</dbReference>
<dbReference type="PANTHER" id="PTHR30519">
    <property type="entry name" value="5-METHYLTETRAHYDROPTEROYLTRIGLUTAMATE--HOMOCYSTEINE METHYLTRANSFERASE"/>
    <property type="match status" value="1"/>
</dbReference>
<dbReference type="Pfam" id="PF08267">
    <property type="entry name" value="Meth_synt_1"/>
    <property type="match status" value="1"/>
</dbReference>
<dbReference type="Pfam" id="PF01717">
    <property type="entry name" value="Meth_synt_2"/>
    <property type="match status" value="1"/>
</dbReference>
<dbReference type="PIRSF" id="PIRSF000382">
    <property type="entry name" value="MeTrfase_B12_ind"/>
    <property type="match status" value="1"/>
</dbReference>
<dbReference type="SUPFAM" id="SSF51726">
    <property type="entry name" value="UROD/MetE-like"/>
    <property type="match status" value="2"/>
</dbReference>
<gene>
    <name evidence="1" type="primary">metE</name>
    <name type="ordered locus">BCE33L3760</name>
</gene>
<sequence>MAIQTSNLGYPRIGLQREWKKTLEAFWSNKINEEQFLTTMKEIRLQHVKVQQEKGIELIPIGDFTYYDHVLDTAYMLGFIPSRFSEFTSYLDVYFAMARGSKDHVASEMTKWFNTNYHYIVPEYEEGLQISLKDNRPLRLYEEAKQELGVDGKPVILGPYTFLKLAKGYTQEQFATILKQLVAPYVQLLSELHAAGAQIIQVDEPIFASLTKEEVQQAKEIYEAIRKEVPNATLLLQTYFDSVEENYENIITFPVSSIGLDFVHGKEGNLNAISKYGFPADKTLAVGCIDGRNIWRADLDEVLTLFTKLQTQVQTKDFIVQPSCSLLHTPIDKTEETHLSTELFDALAFANQKLEELVLIHSALTQGTESISNELETYRNVHHTIRSSAARNREDVKAARTALKEEDFSRPLPFEKRYKLQQVALKLPLLPTTTIGSFPQTTEVRQTRKEWRTGVISNKQYEQFIEKETEKWIRYQEEIGLDVLVHGEFERTDMVEYFGERLAGFSFTKNGWVQSYGSRCVKPPVIYGDVAFINGMTIKETVYAQSLTEKVVKGMLTGPVTILNWSFVRNDIPRKEVSYQIALALRHEIELLESSGIRVIQVDEPALREGMPLKEKDWDAYITWAVQSFLLATSSVANVTQIHTHMCYSNFEDIVDAIRALDADVISIETSRSHGEFIDTLKHTTYEKGIGLGVYDIHSPRVPSKDEMYKIVEQSLEVCDPKYFWINPDCGLKTRRTEEVIPALEHMVQAAKDARSLLKTNA</sequence>
<accession>Q635S6</accession>
<name>METE_BACCZ</name>
<proteinExistence type="inferred from homology"/>
<evidence type="ECO:0000255" key="1">
    <source>
        <dbReference type="HAMAP-Rule" id="MF_00172"/>
    </source>
</evidence>
<comment type="function">
    <text evidence="1">Catalyzes the transfer of a methyl group from 5-methyltetrahydrofolate to homocysteine resulting in methionine formation.</text>
</comment>
<comment type="catalytic activity">
    <reaction evidence="1">
        <text>5-methyltetrahydropteroyltri-L-glutamate + L-homocysteine = tetrahydropteroyltri-L-glutamate + L-methionine</text>
        <dbReference type="Rhea" id="RHEA:21196"/>
        <dbReference type="ChEBI" id="CHEBI:57844"/>
        <dbReference type="ChEBI" id="CHEBI:58140"/>
        <dbReference type="ChEBI" id="CHEBI:58199"/>
        <dbReference type="ChEBI" id="CHEBI:58207"/>
        <dbReference type="EC" id="2.1.1.14"/>
    </reaction>
</comment>
<comment type="cofactor">
    <cofactor evidence="1">
        <name>Zn(2+)</name>
        <dbReference type="ChEBI" id="CHEBI:29105"/>
    </cofactor>
    <text evidence="1">Binds 1 zinc ion per subunit.</text>
</comment>
<comment type="pathway">
    <text evidence="1">Amino-acid biosynthesis; L-methionine biosynthesis via de novo pathway; L-methionine from L-homocysteine (MetE route): step 1/1.</text>
</comment>
<comment type="similarity">
    <text evidence="1">Belongs to the vitamin-B12 independent methionine synthase family.</text>
</comment>